<accession>Q6HAJ6</accession>
<organism>
    <name type="scientific">Bacillus thuringiensis subsp. konkukian (strain 97-27)</name>
    <dbReference type="NCBI Taxonomy" id="281309"/>
    <lineage>
        <taxon>Bacteria</taxon>
        <taxon>Bacillati</taxon>
        <taxon>Bacillota</taxon>
        <taxon>Bacilli</taxon>
        <taxon>Bacillales</taxon>
        <taxon>Bacillaceae</taxon>
        <taxon>Bacillus</taxon>
        <taxon>Bacillus cereus group</taxon>
    </lineage>
</organism>
<dbReference type="EMBL" id="AE017355">
    <property type="protein sequence ID" value="AAT63437.1"/>
    <property type="molecule type" value="Genomic_DNA"/>
</dbReference>
<dbReference type="RefSeq" id="WP_000104901.1">
    <property type="nucleotide sequence ID" value="NC_005957.1"/>
</dbReference>
<dbReference type="RefSeq" id="YP_039430.1">
    <property type="nucleotide sequence ID" value="NC_005957.1"/>
</dbReference>
<dbReference type="SMR" id="Q6HAJ6"/>
<dbReference type="GeneID" id="93005686"/>
<dbReference type="KEGG" id="btk:BT9727_5121"/>
<dbReference type="PATRIC" id="fig|281309.8.peg.5446"/>
<dbReference type="HOGENOM" id="CLU_113736_0_1_9"/>
<dbReference type="Proteomes" id="UP000001301">
    <property type="component" value="Chromosome"/>
</dbReference>
<dbReference type="GO" id="GO:0005886">
    <property type="term" value="C:plasma membrane"/>
    <property type="evidence" value="ECO:0007669"/>
    <property type="project" value="UniProtKB-SubCell"/>
</dbReference>
<dbReference type="GO" id="GO:0019835">
    <property type="term" value="P:cytolysis"/>
    <property type="evidence" value="ECO:0007669"/>
    <property type="project" value="UniProtKB-UniRule"/>
</dbReference>
<dbReference type="GO" id="GO:0031640">
    <property type="term" value="P:killing of cells of another organism"/>
    <property type="evidence" value="ECO:0007669"/>
    <property type="project" value="UniProtKB-KW"/>
</dbReference>
<dbReference type="GO" id="GO:0012501">
    <property type="term" value="P:programmed cell death"/>
    <property type="evidence" value="ECO:0007669"/>
    <property type="project" value="UniProtKB-UniRule"/>
</dbReference>
<dbReference type="HAMAP" id="MF_01141">
    <property type="entry name" value="LrgA"/>
    <property type="match status" value="1"/>
</dbReference>
<dbReference type="InterPro" id="IPR023736">
    <property type="entry name" value="Antiholin-like_LrgA"/>
</dbReference>
<dbReference type="InterPro" id="IPR005538">
    <property type="entry name" value="LrgA/CidA"/>
</dbReference>
<dbReference type="NCBIfam" id="NF003155">
    <property type="entry name" value="PRK04125.1"/>
    <property type="match status" value="1"/>
</dbReference>
<dbReference type="PANTHER" id="PTHR33931:SF4">
    <property type="entry name" value="ANTIHOLIN-LIKE PROTEIN LRGA"/>
    <property type="match status" value="1"/>
</dbReference>
<dbReference type="PANTHER" id="PTHR33931">
    <property type="entry name" value="HOLIN-LIKE PROTEIN CIDA-RELATED"/>
    <property type="match status" value="1"/>
</dbReference>
<dbReference type="Pfam" id="PF03788">
    <property type="entry name" value="LrgA"/>
    <property type="match status" value="1"/>
</dbReference>
<gene>
    <name evidence="1" type="primary">lrgA</name>
    <name type="ordered locus">BT9727_5121</name>
</gene>
<proteinExistence type="inferred from homology"/>
<protein>
    <recommendedName>
        <fullName evidence="1">Antiholin-like protein LrgA</fullName>
    </recommendedName>
</protein>
<sequence>MSTKKVYSFLSQAFIFSAIMLISNIIATHLPIPMPSSVIGLVILFSLLCLKVIKLEQVESLGTALTGIIGFLFVPSGISVINSLGVMGQYFVQILTVIVVATVILLAVTGLFAQFILGKDEKETEDTKELKVVNKGRKHGKVA</sequence>
<keyword id="KW-1003">Cell membrane</keyword>
<keyword id="KW-0204">Cytolysis</keyword>
<keyword id="KW-0472">Membrane</keyword>
<keyword id="KW-0812">Transmembrane</keyword>
<keyword id="KW-1133">Transmembrane helix</keyword>
<comment type="function">
    <text evidence="1">Inhibits the expression or activity of extracellular murein hydrolases by interacting, possibly with LrgB, with the holin-like protein CidA. The LrgAB and CidA proteins may affect the proton motive force of the membrane. May be involved in programmed cell death (PCD), possibly triggering PCD in response to antibiotics and environmental stresses.</text>
</comment>
<comment type="subcellular location">
    <subcellularLocation>
        <location evidence="1">Cell membrane</location>
        <topology evidence="1">Multi-pass membrane protein</topology>
    </subcellularLocation>
</comment>
<comment type="similarity">
    <text evidence="1">Belongs to the CidA/LrgA family. LrgA subfamily.</text>
</comment>
<feature type="chain" id="PRO_1000065435" description="Antiholin-like protein LrgA">
    <location>
        <begin position="1"/>
        <end position="143"/>
    </location>
</feature>
<feature type="transmembrane region" description="Helical" evidence="1">
    <location>
        <begin position="6"/>
        <end position="26"/>
    </location>
</feature>
<feature type="transmembrane region" description="Helical" evidence="1">
    <location>
        <begin position="30"/>
        <end position="50"/>
    </location>
</feature>
<feature type="transmembrane region" description="Helical" evidence="1">
    <location>
        <begin position="61"/>
        <end position="81"/>
    </location>
</feature>
<feature type="transmembrane region" description="Helical" evidence="1">
    <location>
        <begin position="97"/>
        <end position="117"/>
    </location>
</feature>
<evidence type="ECO:0000255" key="1">
    <source>
        <dbReference type="HAMAP-Rule" id="MF_01141"/>
    </source>
</evidence>
<reference key="1">
    <citation type="journal article" date="2006" name="J. Bacteriol.">
        <title>Pathogenomic sequence analysis of Bacillus cereus and Bacillus thuringiensis isolates closely related to Bacillus anthracis.</title>
        <authorList>
            <person name="Han C.S."/>
            <person name="Xie G."/>
            <person name="Challacombe J.F."/>
            <person name="Altherr M.R."/>
            <person name="Bhotika S.S."/>
            <person name="Bruce D."/>
            <person name="Campbell C.S."/>
            <person name="Campbell M.L."/>
            <person name="Chen J."/>
            <person name="Chertkov O."/>
            <person name="Cleland C."/>
            <person name="Dimitrijevic M."/>
            <person name="Doggett N.A."/>
            <person name="Fawcett J.J."/>
            <person name="Glavina T."/>
            <person name="Goodwin L.A."/>
            <person name="Hill K.K."/>
            <person name="Hitchcock P."/>
            <person name="Jackson P.J."/>
            <person name="Keim P."/>
            <person name="Kewalramani A.R."/>
            <person name="Longmire J."/>
            <person name="Lucas S."/>
            <person name="Malfatti S."/>
            <person name="McMurry K."/>
            <person name="Meincke L.J."/>
            <person name="Misra M."/>
            <person name="Moseman B.L."/>
            <person name="Mundt M."/>
            <person name="Munk A.C."/>
            <person name="Okinaka R.T."/>
            <person name="Parson-Quintana B."/>
            <person name="Reilly L.P."/>
            <person name="Richardson P."/>
            <person name="Robinson D.L."/>
            <person name="Rubin E."/>
            <person name="Saunders E."/>
            <person name="Tapia R."/>
            <person name="Tesmer J.G."/>
            <person name="Thayer N."/>
            <person name="Thompson L.S."/>
            <person name="Tice H."/>
            <person name="Ticknor L.O."/>
            <person name="Wills P.L."/>
            <person name="Brettin T.S."/>
            <person name="Gilna P."/>
        </authorList>
    </citation>
    <scope>NUCLEOTIDE SEQUENCE [LARGE SCALE GENOMIC DNA]</scope>
    <source>
        <strain>97-27</strain>
    </source>
</reference>
<name>LRGA_BACHK</name>